<protein>
    <recommendedName>
        <fullName evidence="1">4-hydroxy-tetrahydrodipicolinate synthase</fullName>
        <shortName evidence="1">HTPA synthase</shortName>
        <ecNumber evidence="1">4.3.3.7</ecNumber>
    </recommendedName>
</protein>
<gene>
    <name evidence="1" type="primary">dapA</name>
    <name type="ordered locus">Shewmr7_2412</name>
</gene>
<proteinExistence type="inferred from homology"/>
<evidence type="ECO:0000255" key="1">
    <source>
        <dbReference type="HAMAP-Rule" id="MF_00418"/>
    </source>
</evidence>
<evidence type="ECO:0000305" key="2"/>
<sequence>MINGSIVALITPMNSDGSVDFASLERLVEFHIDQGTDAIVAVGTTGESATLPMNEHVTVVAQTVKFAAGRIPVIGGNGANATSEAIELTKSLSKVGVAAMLGVTPYYNKPTPKGLVAHYKAVAASTDIPQILYNVPGRTAVDMKPETVAELVGVSNIIGVKEATGDVSRVKRLRELCGNDFMLYSGDDATAREFLLLGGNGVISVANNIVPKAFKAMCDAALAGNAELAASIDEPLRGLYSTLFCEANPIPVKWAAHRMGLIECGHIRLPLTELSEQCHGLLLDAMTRAQIEVK</sequence>
<dbReference type="EC" id="4.3.3.7" evidence="1"/>
<dbReference type="EMBL" id="CP000444">
    <property type="protein sequence ID" value="ABI43397.1"/>
    <property type="molecule type" value="Genomic_DNA"/>
</dbReference>
<dbReference type="SMR" id="Q0HU08"/>
<dbReference type="KEGG" id="shm:Shewmr7_2412"/>
<dbReference type="HOGENOM" id="CLU_049343_7_1_6"/>
<dbReference type="UniPathway" id="UPA00034">
    <property type="reaction ID" value="UER00017"/>
</dbReference>
<dbReference type="GO" id="GO:0005829">
    <property type="term" value="C:cytosol"/>
    <property type="evidence" value="ECO:0007669"/>
    <property type="project" value="TreeGrafter"/>
</dbReference>
<dbReference type="GO" id="GO:0008840">
    <property type="term" value="F:4-hydroxy-tetrahydrodipicolinate synthase activity"/>
    <property type="evidence" value="ECO:0007669"/>
    <property type="project" value="UniProtKB-UniRule"/>
</dbReference>
<dbReference type="GO" id="GO:0019877">
    <property type="term" value="P:diaminopimelate biosynthetic process"/>
    <property type="evidence" value="ECO:0007669"/>
    <property type="project" value="UniProtKB-UniRule"/>
</dbReference>
<dbReference type="GO" id="GO:0009089">
    <property type="term" value="P:lysine biosynthetic process via diaminopimelate"/>
    <property type="evidence" value="ECO:0007669"/>
    <property type="project" value="UniProtKB-UniRule"/>
</dbReference>
<dbReference type="CDD" id="cd00950">
    <property type="entry name" value="DHDPS"/>
    <property type="match status" value="1"/>
</dbReference>
<dbReference type="Gene3D" id="3.20.20.70">
    <property type="entry name" value="Aldolase class I"/>
    <property type="match status" value="1"/>
</dbReference>
<dbReference type="HAMAP" id="MF_00418">
    <property type="entry name" value="DapA"/>
    <property type="match status" value="1"/>
</dbReference>
<dbReference type="InterPro" id="IPR013785">
    <property type="entry name" value="Aldolase_TIM"/>
</dbReference>
<dbReference type="InterPro" id="IPR005263">
    <property type="entry name" value="DapA"/>
</dbReference>
<dbReference type="InterPro" id="IPR002220">
    <property type="entry name" value="DapA-like"/>
</dbReference>
<dbReference type="InterPro" id="IPR020625">
    <property type="entry name" value="Schiff_base-form_aldolases_AS"/>
</dbReference>
<dbReference type="InterPro" id="IPR020624">
    <property type="entry name" value="Schiff_base-form_aldolases_CS"/>
</dbReference>
<dbReference type="NCBIfam" id="TIGR00674">
    <property type="entry name" value="dapA"/>
    <property type="match status" value="1"/>
</dbReference>
<dbReference type="PANTHER" id="PTHR12128:SF66">
    <property type="entry name" value="4-HYDROXY-2-OXOGLUTARATE ALDOLASE, MITOCHONDRIAL"/>
    <property type="match status" value="1"/>
</dbReference>
<dbReference type="PANTHER" id="PTHR12128">
    <property type="entry name" value="DIHYDRODIPICOLINATE SYNTHASE"/>
    <property type="match status" value="1"/>
</dbReference>
<dbReference type="Pfam" id="PF00701">
    <property type="entry name" value="DHDPS"/>
    <property type="match status" value="1"/>
</dbReference>
<dbReference type="PIRSF" id="PIRSF001365">
    <property type="entry name" value="DHDPS"/>
    <property type="match status" value="1"/>
</dbReference>
<dbReference type="PRINTS" id="PR00146">
    <property type="entry name" value="DHPICSNTHASE"/>
</dbReference>
<dbReference type="SMART" id="SM01130">
    <property type="entry name" value="DHDPS"/>
    <property type="match status" value="1"/>
</dbReference>
<dbReference type="SUPFAM" id="SSF51569">
    <property type="entry name" value="Aldolase"/>
    <property type="match status" value="1"/>
</dbReference>
<dbReference type="PROSITE" id="PS00665">
    <property type="entry name" value="DHDPS_1"/>
    <property type="match status" value="1"/>
</dbReference>
<dbReference type="PROSITE" id="PS00666">
    <property type="entry name" value="DHDPS_2"/>
    <property type="match status" value="1"/>
</dbReference>
<organism>
    <name type="scientific">Shewanella sp. (strain MR-7)</name>
    <dbReference type="NCBI Taxonomy" id="60481"/>
    <lineage>
        <taxon>Bacteria</taxon>
        <taxon>Pseudomonadati</taxon>
        <taxon>Pseudomonadota</taxon>
        <taxon>Gammaproteobacteria</taxon>
        <taxon>Alteromonadales</taxon>
        <taxon>Shewanellaceae</taxon>
        <taxon>Shewanella</taxon>
    </lineage>
</organism>
<comment type="function">
    <text evidence="1">Catalyzes the condensation of (S)-aspartate-beta-semialdehyde [(S)-ASA] and pyruvate to 4-hydroxy-tetrahydrodipicolinate (HTPA).</text>
</comment>
<comment type="catalytic activity">
    <reaction evidence="1">
        <text>L-aspartate 4-semialdehyde + pyruvate = (2S,4S)-4-hydroxy-2,3,4,5-tetrahydrodipicolinate + H2O + H(+)</text>
        <dbReference type="Rhea" id="RHEA:34171"/>
        <dbReference type="ChEBI" id="CHEBI:15361"/>
        <dbReference type="ChEBI" id="CHEBI:15377"/>
        <dbReference type="ChEBI" id="CHEBI:15378"/>
        <dbReference type="ChEBI" id="CHEBI:67139"/>
        <dbReference type="ChEBI" id="CHEBI:537519"/>
        <dbReference type="EC" id="4.3.3.7"/>
    </reaction>
</comment>
<comment type="pathway">
    <text evidence="1">Amino-acid biosynthesis; L-lysine biosynthesis via DAP pathway; (S)-tetrahydrodipicolinate from L-aspartate: step 3/4.</text>
</comment>
<comment type="subunit">
    <text evidence="1">Homotetramer; dimer of dimers.</text>
</comment>
<comment type="subcellular location">
    <subcellularLocation>
        <location evidence="1">Cytoplasm</location>
    </subcellularLocation>
</comment>
<comment type="similarity">
    <text evidence="1">Belongs to the DapA family.</text>
</comment>
<comment type="caution">
    <text evidence="2">Was originally thought to be a dihydrodipicolinate synthase (DHDPS), catalyzing the condensation of (S)-aspartate-beta-semialdehyde [(S)-ASA] and pyruvate to dihydrodipicolinate (DHDP). However, it was shown in E.coli that the product of the enzymatic reaction is not dihydrodipicolinate but in fact (4S)-4-hydroxy-2,3,4,5-tetrahydro-(2S)-dipicolinic acid (HTPA), and that the consecutive dehydration reaction leading to DHDP is not spontaneous but catalyzed by DapB.</text>
</comment>
<accession>Q0HU08</accession>
<keyword id="KW-0028">Amino-acid biosynthesis</keyword>
<keyword id="KW-0963">Cytoplasm</keyword>
<keyword id="KW-0220">Diaminopimelate biosynthesis</keyword>
<keyword id="KW-0456">Lyase</keyword>
<keyword id="KW-0457">Lysine biosynthesis</keyword>
<keyword id="KW-0704">Schiff base</keyword>
<name>DAPA_SHESR</name>
<reference key="1">
    <citation type="submission" date="2006-08" db="EMBL/GenBank/DDBJ databases">
        <title>Complete sequence of chromosome 1 of Shewanella sp. MR-7.</title>
        <authorList>
            <person name="Copeland A."/>
            <person name="Lucas S."/>
            <person name="Lapidus A."/>
            <person name="Barry K."/>
            <person name="Detter J.C."/>
            <person name="Glavina del Rio T."/>
            <person name="Hammon N."/>
            <person name="Israni S."/>
            <person name="Dalin E."/>
            <person name="Tice H."/>
            <person name="Pitluck S."/>
            <person name="Kiss H."/>
            <person name="Brettin T."/>
            <person name="Bruce D."/>
            <person name="Han C."/>
            <person name="Tapia R."/>
            <person name="Gilna P."/>
            <person name="Schmutz J."/>
            <person name="Larimer F."/>
            <person name="Land M."/>
            <person name="Hauser L."/>
            <person name="Kyrpides N."/>
            <person name="Mikhailova N."/>
            <person name="Nealson K."/>
            <person name="Konstantinidis K."/>
            <person name="Klappenbach J."/>
            <person name="Tiedje J."/>
            <person name="Richardson P."/>
        </authorList>
    </citation>
    <scope>NUCLEOTIDE SEQUENCE [LARGE SCALE GENOMIC DNA]</scope>
    <source>
        <strain>MR-7</strain>
    </source>
</reference>
<feature type="chain" id="PRO_1000050269" description="4-hydroxy-tetrahydrodipicolinate synthase">
    <location>
        <begin position="1"/>
        <end position="294"/>
    </location>
</feature>
<feature type="active site" description="Proton donor/acceptor" evidence="1">
    <location>
        <position position="133"/>
    </location>
</feature>
<feature type="active site" description="Schiff-base intermediate with substrate" evidence="1">
    <location>
        <position position="161"/>
    </location>
</feature>
<feature type="binding site" evidence="1">
    <location>
        <position position="45"/>
    </location>
    <ligand>
        <name>pyruvate</name>
        <dbReference type="ChEBI" id="CHEBI:15361"/>
    </ligand>
</feature>
<feature type="binding site" evidence="1">
    <location>
        <position position="203"/>
    </location>
    <ligand>
        <name>pyruvate</name>
        <dbReference type="ChEBI" id="CHEBI:15361"/>
    </ligand>
</feature>
<feature type="site" description="Part of a proton relay during catalysis" evidence="1">
    <location>
        <position position="44"/>
    </location>
</feature>
<feature type="site" description="Part of a proton relay during catalysis" evidence="1">
    <location>
        <position position="107"/>
    </location>
</feature>